<evidence type="ECO:0000255" key="1">
    <source>
        <dbReference type="HAMAP-Rule" id="MF_00050"/>
    </source>
</evidence>
<feature type="chain" id="PRO_0000161078" description="Elongation factor Ts">
    <location>
        <begin position="1"/>
        <end position="330"/>
    </location>
</feature>
<feature type="region of interest" description="Involved in Mg(2+) ion dislocation from EF-Tu" evidence="1">
    <location>
        <begin position="79"/>
        <end position="82"/>
    </location>
</feature>
<accession>Q8A0Z3</accession>
<gene>
    <name evidence="1" type="primary">tsf</name>
    <name type="ordered locus">BT_3878</name>
</gene>
<proteinExistence type="inferred from homology"/>
<name>EFTS_BACTN</name>
<dbReference type="EMBL" id="AE015928">
    <property type="protein sequence ID" value="AAO78983.1"/>
    <property type="molecule type" value="Genomic_DNA"/>
</dbReference>
<dbReference type="RefSeq" id="NP_812789.1">
    <property type="nucleotide sequence ID" value="NC_004663.1"/>
</dbReference>
<dbReference type="RefSeq" id="WP_008764142.1">
    <property type="nucleotide sequence ID" value="NC_004663.1"/>
</dbReference>
<dbReference type="SMR" id="Q8A0Z3"/>
<dbReference type="FunCoup" id="Q8A0Z3">
    <property type="interactions" value="535"/>
</dbReference>
<dbReference type="STRING" id="226186.BT_3878"/>
<dbReference type="PaxDb" id="226186-BT_3878"/>
<dbReference type="EnsemblBacteria" id="AAO78983">
    <property type="protein sequence ID" value="AAO78983"/>
    <property type="gene ID" value="BT_3878"/>
</dbReference>
<dbReference type="GeneID" id="60925053"/>
<dbReference type="KEGG" id="bth:BT_3878"/>
<dbReference type="PATRIC" id="fig|226186.12.peg.3942"/>
<dbReference type="eggNOG" id="COG0264">
    <property type="taxonomic scope" value="Bacteria"/>
</dbReference>
<dbReference type="HOGENOM" id="CLU_047155_0_0_10"/>
<dbReference type="InParanoid" id="Q8A0Z3"/>
<dbReference type="OrthoDB" id="9808348at2"/>
<dbReference type="Proteomes" id="UP000001414">
    <property type="component" value="Chromosome"/>
</dbReference>
<dbReference type="GO" id="GO:0005737">
    <property type="term" value="C:cytoplasm"/>
    <property type="evidence" value="ECO:0007669"/>
    <property type="project" value="UniProtKB-SubCell"/>
</dbReference>
<dbReference type="GO" id="GO:0003746">
    <property type="term" value="F:translation elongation factor activity"/>
    <property type="evidence" value="ECO:0000318"/>
    <property type="project" value="GO_Central"/>
</dbReference>
<dbReference type="GO" id="GO:0006414">
    <property type="term" value="P:translational elongation"/>
    <property type="evidence" value="ECO:0000318"/>
    <property type="project" value="GO_Central"/>
</dbReference>
<dbReference type="CDD" id="cd14275">
    <property type="entry name" value="UBA_EF-Ts"/>
    <property type="match status" value="1"/>
</dbReference>
<dbReference type="FunFam" id="1.10.8.10:FF:000001">
    <property type="entry name" value="Elongation factor Ts"/>
    <property type="match status" value="1"/>
</dbReference>
<dbReference type="FunFam" id="3.30.479.20:FF:000015">
    <property type="entry name" value="Elongation factor Ts"/>
    <property type="match status" value="1"/>
</dbReference>
<dbReference type="FunFam" id="3.30.479.20:FF:000018">
    <property type="entry name" value="Elongation factor Ts"/>
    <property type="match status" value="1"/>
</dbReference>
<dbReference type="Gene3D" id="1.10.286.20">
    <property type="match status" value="1"/>
</dbReference>
<dbReference type="Gene3D" id="1.10.8.10">
    <property type="entry name" value="DNA helicase RuvA subunit, C-terminal domain"/>
    <property type="match status" value="1"/>
</dbReference>
<dbReference type="Gene3D" id="3.30.479.20">
    <property type="entry name" value="Elongation factor Ts, dimerisation domain"/>
    <property type="match status" value="2"/>
</dbReference>
<dbReference type="HAMAP" id="MF_00050">
    <property type="entry name" value="EF_Ts"/>
    <property type="match status" value="1"/>
</dbReference>
<dbReference type="InterPro" id="IPR036402">
    <property type="entry name" value="EF-Ts_dimer_sf"/>
</dbReference>
<dbReference type="InterPro" id="IPR001816">
    <property type="entry name" value="Transl_elong_EFTs/EF1B"/>
</dbReference>
<dbReference type="InterPro" id="IPR014039">
    <property type="entry name" value="Transl_elong_EFTs/EF1B_dimer"/>
</dbReference>
<dbReference type="InterPro" id="IPR018101">
    <property type="entry name" value="Transl_elong_Ts_CS"/>
</dbReference>
<dbReference type="InterPro" id="IPR009060">
    <property type="entry name" value="UBA-like_sf"/>
</dbReference>
<dbReference type="NCBIfam" id="TIGR00116">
    <property type="entry name" value="tsf"/>
    <property type="match status" value="1"/>
</dbReference>
<dbReference type="PANTHER" id="PTHR11741">
    <property type="entry name" value="ELONGATION FACTOR TS"/>
    <property type="match status" value="1"/>
</dbReference>
<dbReference type="PANTHER" id="PTHR11741:SF0">
    <property type="entry name" value="ELONGATION FACTOR TS, MITOCHONDRIAL"/>
    <property type="match status" value="1"/>
</dbReference>
<dbReference type="Pfam" id="PF00889">
    <property type="entry name" value="EF_TS"/>
    <property type="match status" value="2"/>
</dbReference>
<dbReference type="SUPFAM" id="SSF54713">
    <property type="entry name" value="Elongation factor Ts (EF-Ts), dimerisation domain"/>
    <property type="match status" value="1"/>
</dbReference>
<dbReference type="SUPFAM" id="SSF46934">
    <property type="entry name" value="UBA-like"/>
    <property type="match status" value="1"/>
</dbReference>
<dbReference type="PROSITE" id="PS01126">
    <property type="entry name" value="EF_TS_1"/>
    <property type="match status" value="1"/>
</dbReference>
<dbReference type="PROSITE" id="PS01127">
    <property type="entry name" value="EF_TS_2"/>
    <property type="match status" value="1"/>
</dbReference>
<reference key="1">
    <citation type="journal article" date="2003" name="Science">
        <title>A genomic view of the human-Bacteroides thetaiotaomicron symbiosis.</title>
        <authorList>
            <person name="Xu J."/>
            <person name="Bjursell M.K."/>
            <person name="Himrod J."/>
            <person name="Deng S."/>
            <person name="Carmichael L.K."/>
            <person name="Chiang H.C."/>
            <person name="Hooper L.V."/>
            <person name="Gordon J.I."/>
        </authorList>
    </citation>
    <scope>NUCLEOTIDE SEQUENCE [LARGE SCALE GENOMIC DNA]</scope>
    <source>
        <strain>ATCC 29148 / DSM 2079 / JCM 5827 / CCUG 10774 / NCTC 10582 / VPI-5482 / E50</strain>
    </source>
</reference>
<comment type="function">
    <text evidence="1">Associates with the EF-Tu.GDP complex and induces the exchange of GDP to GTP. It remains bound to the aminoacyl-tRNA.EF-Tu.GTP complex up to the GTP hydrolysis stage on the ribosome.</text>
</comment>
<comment type="subcellular location">
    <subcellularLocation>
        <location evidence="1">Cytoplasm</location>
    </subcellularLocation>
</comment>
<comment type="similarity">
    <text evidence="1">Belongs to the EF-Ts family.</text>
</comment>
<sequence length="330" mass="35897">MAVTMADITKLRKMTGAGMMDCKNALTEAEGDYDKAMEIIRKKGQAVAAKRSERDASEGCVLAKTTGDYAVVIALKCETDFVAQNADFVKLTQDILDLAVANKCKTLDEVKALPMGNGTVQDAVVDRSGITGEKMELDGYMTVEGTSTAVYNHMNRNGLCTIVAFNKNVDDQLAKQVAMQIAAMNPIAIDEDGVSEEVKEKEIAVAIEKTKAEQVQKAVEAALKKANINPAHVDSEEHMESNMAKGWITAEDIAKAKEIIATVSAEKAAHLPEQMIQNIAKGRLGKFLKEVCLLNQEDIMDAKKTVREVLAAADPELKVLDFKRFTLKAE</sequence>
<organism>
    <name type="scientific">Bacteroides thetaiotaomicron (strain ATCC 29148 / DSM 2079 / JCM 5827 / CCUG 10774 / NCTC 10582 / VPI-5482 / E50)</name>
    <dbReference type="NCBI Taxonomy" id="226186"/>
    <lineage>
        <taxon>Bacteria</taxon>
        <taxon>Pseudomonadati</taxon>
        <taxon>Bacteroidota</taxon>
        <taxon>Bacteroidia</taxon>
        <taxon>Bacteroidales</taxon>
        <taxon>Bacteroidaceae</taxon>
        <taxon>Bacteroides</taxon>
    </lineage>
</organism>
<keyword id="KW-0963">Cytoplasm</keyword>
<keyword id="KW-0251">Elongation factor</keyword>
<keyword id="KW-0648">Protein biosynthesis</keyword>
<keyword id="KW-1185">Reference proteome</keyword>
<protein>
    <recommendedName>
        <fullName evidence="1">Elongation factor Ts</fullName>
        <shortName evidence="1">EF-Ts</shortName>
    </recommendedName>
</protein>